<name>RFCL_HALMA</name>
<organism>
    <name type="scientific">Haloarcula marismortui (strain ATCC 43049 / DSM 3752 / JCM 8966 / VKM B-1809)</name>
    <name type="common">Halobacterium marismortui</name>
    <dbReference type="NCBI Taxonomy" id="272569"/>
    <lineage>
        <taxon>Archaea</taxon>
        <taxon>Methanobacteriati</taxon>
        <taxon>Methanobacteriota</taxon>
        <taxon>Stenosarchaea group</taxon>
        <taxon>Halobacteria</taxon>
        <taxon>Halobacteriales</taxon>
        <taxon>Haloarculaceae</taxon>
        <taxon>Haloarcula</taxon>
    </lineage>
</organism>
<dbReference type="EMBL" id="AY596297">
    <property type="protein sequence ID" value="AAV46645.1"/>
    <property type="molecule type" value="Genomic_DNA"/>
</dbReference>
<dbReference type="RefSeq" id="WP_011223815.1">
    <property type="nucleotide sequence ID" value="NC_006396.1"/>
</dbReference>
<dbReference type="SMR" id="Q5V1F7"/>
<dbReference type="STRING" id="272569.rrnAC1744"/>
<dbReference type="PaxDb" id="272569-rrnAC1744"/>
<dbReference type="EnsemblBacteria" id="AAV46645">
    <property type="protein sequence ID" value="AAV46645"/>
    <property type="gene ID" value="rrnAC1744"/>
</dbReference>
<dbReference type="GeneID" id="40152700"/>
<dbReference type="KEGG" id="hma:rrnAC1744"/>
<dbReference type="PATRIC" id="fig|272569.17.peg.2424"/>
<dbReference type="eggNOG" id="arCOG00470">
    <property type="taxonomic scope" value="Archaea"/>
</dbReference>
<dbReference type="HOGENOM" id="CLU_027255_1_1_2"/>
<dbReference type="Proteomes" id="UP000001169">
    <property type="component" value="Chromosome I"/>
</dbReference>
<dbReference type="GO" id="GO:0005524">
    <property type="term" value="F:ATP binding"/>
    <property type="evidence" value="ECO:0007669"/>
    <property type="project" value="UniProtKB-UniRule"/>
</dbReference>
<dbReference type="GO" id="GO:0016887">
    <property type="term" value="F:ATP hydrolysis activity"/>
    <property type="evidence" value="ECO:0007669"/>
    <property type="project" value="InterPro"/>
</dbReference>
<dbReference type="GO" id="GO:0003689">
    <property type="term" value="F:DNA clamp loader activity"/>
    <property type="evidence" value="ECO:0007669"/>
    <property type="project" value="UniProtKB-UniRule"/>
</dbReference>
<dbReference type="GO" id="GO:0006260">
    <property type="term" value="P:DNA replication"/>
    <property type="evidence" value="ECO:0007669"/>
    <property type="project" value="UniProtKB-UniRule"/>
</dbReference>
<dbReference type="CDD" id="cd00009">
    <property type="entry name" value="AAA"/>
    <property type="match status" value="1"/>
</dbReference>
<dbReference type="CDD" id="cd18140">
    <property type="entry name" value="HLD_clamp_RFC"/>
    <property type="match status" value="1"/>
</dbReference>
<dbReference type="Gene3D" id="1.10.8.60">
    <property type="match status" value="1"/>
</dbReference>
<dbReference type="Gene3D" id="3.40.50.300">
    <property type="entry name" value="P-loop containing nucleotide triphosphate hydrolases"/>
    <property type="match status" value="1"/>
</dbReference>
<dbReference type="HAMAP" id="MF_01508">
    <property type="entry name" value="RfcL"/>
    <property type="match status" value="1"/>
</dbReference>
<dbReference type="InterPro" id="IPR003593">
    <property type="entry name" value="AAA+_ATPase"/>
</dbReference>
<dbReference type="InterPro" id="IPR003959">
    <property type="entry name" value="ATPase_AAA_core"/>
</dbReference>
<dbReference type="InterPro" id="IPR027417">
    <property type="entry name" value="P-loop_NTPase"/>
</dbReference>
<dbReference type="InterPro" id="IPR023935">
    <property type="entry name" value="Rep_factor-C_lsu"/>
</dbReference>
<dbReference type="InterPro" id="IPR047854">
    <property type="entry name" value="RFC_lid"/>
</dbReference>
<dbReference type="NCBIfam" id="NF003228">
    <property type="entry name" value="PRK04195.1-4"/>
    <property type="match status" value="1"/>
</dbReference>
<dbReference type="NCBIfam" id="NF003229">
    <property type="entry name" value="PRK04195.1-5"/>
    <property type="match status" value="1"/>
</dbReference>
<dbReference type="NCBIfam" id="NF003231">
    <property type="entry name" value="PRK04195.2-1"/>
    <property type="match status" value="1"/>
</dbReference>
<dbReference type="PANTHER" id="PTHR23389">
    <property type="entry name" value="CHROMOSOME TRANSMISSION FIDELITY FACTOR 18"/>
    <property type="match status" value="1"/>
</dbReference>
<dbReference type="PANTHER" id="PTHR23389:SF6">
    <property type="entry name" value="REPLICATION FACTOR C SUBUNIT 1"/>
    <property type="match status" value="1"/>
</dbReference>
<dbReference type="Pfam" id="PF00004">
    <property type="entry name" value="AAA"/>
    <property type="match status" value="1"/>
</dbReference>
<dbReference type="SMART" id="SM00382">
    <property type="entry name" value="AAA"/>
    <property type="match status" value="1"/>
</dbReference>
<dbReference type="SUPFAM" id="SSF52540">
    <property type="entry name" value="P-loop containing nucleoside triphosphate hydrolases"/>
    <property type="match status" value="1"/>
</dbReference>
<comment type="function">
    <text evidence="1">Part of the RFC clamp loader complex which loads the PCNA sliding clamp onto DNA.</text>
</comment>
<comment type="subunit">
    <text evidence="1">Heteromultimer composed of small subunits (RfcS) and large subunits (RfcL).</text>
</comment>
<comment type="similarity">
    <text evidence="1">Belongs to the activator 1 small subunits family. RfcL subfamily.</text>
</comment>
<keyword id="KW-0067">ATP-binding</keyword>
<keyword id="KW-0235">DNA replication</keyword>
<keyword id="KW-0547">Nucleotide-binding</keyword>
<keyword id="KW-1185">Reference proteome</keyword>
<protein>
    <recommendedName>
        <fullName evidence="1">Replication factor C large subunit</fullName>
        <shortName evidence="1">RFC large subunit</shortName>
    </recommendedName>
    <alternativeName>
        <fullName evidence="1">Clamp loader large subunit</fullName>
    </alternativeName>
</protein>
<proteinExistence type="inferred from homology"/>
<feature type="chain" id="PRO_0000135949" description="Replication factor C large subunit">
    <location>
        <begin position="1"/>
        <end position="508"/>
    </location>
</feature>
<feature type="region of interest" description="Disordered" evidence="2">
    <location>
        <begin position="425"/>
        <end position="508"/>
    </location>
</feature>
<feature type="compositionally biased region" description="Acidic residues" evidence="2">
    <location>
        <begin position="443"/>
        <end position="461"/>
    </location>
</feature>
<feature type="compositionally biased region" description="Acidic residues" evidence="2">
    <location>
        <begin position="483"/>
        <end position="500"/>
    </location>
</feature>
<feature type="binding site" evidence="1">
    <location>
        <begin position="43"/>
        <end position="50"/>
    </location>
    <ligand>
        <name>ATP</name>
        <dbReference type="ChEBI" id="CHEBI:30616"/>
    </ligand>
</feature>
<sequence>MDWTEKYRPTTLSEVRGNDKARDALKKWAETWDDHREAVILYGSPGIGKTSAAHALANDMEWPTIELNASDSRTKDVINRVAGEAAKSGTLTAGGGGRRLVIMDEADNIHGNADRGGARAITALVKEASQPMILIANEYYEMSNGLRNNCQDIEFRDVSPRSIVPVLRDLCRQEGVEYESDALQELAEQNSGGLRGAVKDLQAIAETTERLTADDVVTGERDTTEGIFEYLDVVLKEAGAQDALEASYDVDETPDDLINWIEDNMPKDYEGTELVRAYEFLSNADQWLGRVRETQNYSFWRYAGDNMTAGVAAARDGTKGGWTRYGPPSYWSKLGRSKGTRNTRDYVAQQIAAIDGVSMRTARREIMPFLATMTHHCRNRELTVAMAATYDMEAEHVSFVTGSGKDTNKVQDIVADAEALKEEAAVEHSGGVFEGASANGGDGDSDADGDAPDTDAGEESGDQQVTLAADDGAESDATSDGTTTDDETETASEAAEDDDQQSGLSDFM</sequence>
<evidence type="ECO:0000255" key="1">
    <source>
        <dbReference type="HAMAP-Rule" id="MF_01508"/>
    </source>
</evidence>
<evidence type="ECO:0000256" key="2">
    <source>
        <dbReference type="SAM" id="MobiDB-lite"/>
    </source>
</evidence>
<reference key="1">
    <citation type="journal article" date="2004" name="Genome Res.">
        <title>Genome sequence of Haloarcula marismortui: a halophilic archaeon from the Dead Sea.</title>
        <authorList>
            <person name="Baliga N.S."/>
            <person name="Bonneau R."/>
            <person name="Facciotti M.T."/>
            <person name="Pan M."/>
            <person name="Glusman G."/>
            <person name="Deutsch E.W."/>
            <person name="Shannon P."/>
            <person name="Chiu Y."/>
            <person name="Weng R.S."/>
            <person name="Gan R.R."/>
            <person name="Hung P."/>
            <person name="Date S.V."/>
            <person name="Marcotte E."/>
            <person name="Hood L."/>
            <person name="Ng W.V."/>
        </authorList>
    </citation>
    <scope>NUCLEOTIDE SEQUENCE [LARGE SCALE GENOMIC DNA]</scope>
    <source>
        <strain>ATCC 43049 / DSM 3752 / JCM 8966 / VKM B-1809</strain>
    </source>
</reference>
<accession>Q5V1F7</accession>
<gene>
    <name evidence="1" type="primary">rfcL</name>
    <name type="synonym">rfcB</name>
    <name type="ordered locus">rrnAC1744</name>
</gene>